<sequence length="311" mass="34577">MTNPLYHKHIISINDLNRDDLESVLHVADKLKQHPNSQLLKDKVIASCFFEASTRTRLSFETAIHRLGASVVGFADGSNTSLGKKGETLADTISVLRTYADAIVIRHPQEGAARLASEFAGDIPVINAGDGANQHPSQTLLDLFTIKETQGRLDNLNIAMVGDLKYGRTVHSLAQALAKFTGNHLYFIAPKVLAMPEHILHLLEEHGVEYSQHETVDEVMSELDILYMTRVQKERLDPSEYANVKAQFILTSADLVNVKDNLKILHPLPRIDEITTDVDNTPYAYYFQQAGNGIYARQALLALVLNKNLVL</sequence>
<organism>
    <name type="scientific">Proteus mirabilis (strain HI4320)</name>
    <dbReference type="NCBI Taxonomy" id="529507"/>
    <lineage>
        <taxon>Bacteria</taxon>
        <taxon>Pseudomonadati</taxon>
        <taxon>Pseudomonadota</taxon>
        <taxon>Gammaproteobacteria</taxon>
        <taxon>Enterobacterales</taxon>
        <taxon>Morganellaceae</taxon>
        <taxon>Proteus</taxon>
    </lineage>
</organism>
<reference key="1">
    <citation type="journal article" date="2008" name="J. Bacteriol.">
        <title>Complete genome sequence of uropathogenic Proteus mirabilis, a master of both adherence and motility.</title>
        <authorList>
            <person name="Pearson M.M."/>
            <person name="Sebaihia M."/>
            <person name="Churcher C."/>
            <person name="Quail M.A."/>
            <person name="Seshasayee A.S."/>
            <person name="Luscombe N.M."/>
            <person name="Abdellah Z."/>
            <person name="Arrosmith C."/>
            <person name="Atkin B."/>
            <person name="Chillingworth T."/>
            <person name="Hauser H."/>
            <person name="Jagels K."/>
            <person name="Moule S."/>
            <person name="Mungall K."/>
            <person name="Norbertczak H."/>
            <person name="Rabbinowitsch E."/>
            <person name="Walker D."/>
            <person name="Whithead S."/>
            <person name="Thomson N.R."/>
            <person name="Rather P.N."/>
            <person name="Parkhill J."/>
            <person name="Mobley H.L.T."/>
        </authorList>
    </citation>
    <scope>NUCLEOTIDE SEQUENCE [LARGE SCALE GENOMIC DNA]</scope>
    <source>
        <strain>HI4320</strain>
    </source>
</reference>
<comment type="function">
    <text evidence="1">Catalyzes the condensation of carbamoyl phosphate and aspartate to form carbamoyl aspartate and inorganic phosphate, the committed step in the de novo pyrimidine nucleotide biosynthesis pathway.</text>
</comment>
<comment type="catalytic activity">
    <reaction evidence="1">
        <text>carbamoyl phosphate + L-aspartate = N-carbamoyl-L-aspartate + phosphate + H(+)</text>
        <dbReference type="Rhea" id="RHEA:20013"/>
        <dbReference type="ChEBI" id="CHEBI:15378"/>
        <dbReference type="ChEBI" id="CHEBI:29991"/>
        <dbReference type="ChEBI" id="CHEBI:32814"/>
        <dbReference type="ChEBI" id="CHEBI:43474"/>
        <dbReference type="ChEBI" id="CHEBI:58228"/>
        <dbReference type="EC" id="2.1.3.2"/>
    </reaction>
</comment>
<comment type="pathway">
    <text evidence="1">Pyrimidine metabolism; UMP biosynthesis via de novo pathway; (S)-dihydroorotate from bicarbonate: step 2/3.</text>
</comment>
<comment type="subunit">
    <text evidence="1">Heterododecamer (2C3:3R2) of six catalytic PyrB chains organized as two trimers (C3), and six regulatory PyrI chains organized as three dimers (R2).</text>
</comment>
<comment type="similarity">
    <text evidence="1">Belongs to the aspartate/ornithine carbamoyltransferase superfamily. ATCase family.</text>
</comment>
<keyword id="KW-0665">Pyrimidine biosynthesis</keyword>
<keyword id="KW-1185">Reference proteome</keyword>
<keyword id="KW-0808">Transferase</keyword>
<name>PYRB_PROMH</name>
<proteinExistence type="inferred from homology"/>
<protein>
    <recommendedName>
        <fullName evidence="1">Aspartate carbamoyltransferase catalytic subunit</fullName>
        <ecNumber evidence="1">2.1.3.2</ecNumber>
    </recommendedName>
    <alternativeName>
        <fullName evidence="1">Aspartate transcarbamylase</fullName>
        <shortName evidence="1">ATCase</shortName>
    </alternativeName>
</protein>
<accession>B4F2M2</accession>
<gene>
    <name evidence="1" type="primary">pyrB</name>
    <name type="ordered locus">PMI3455</name>
</gene>
<evidence type="ECO:0000255" key="1">
    <source>
        <dbReference type="HAMAP-Rule" id="MF_00001"/>
    </source>
</evidence>
<dbReference type="EC" id="2.1.3.2" evidence="1"/>
<dbReference type="EMBL" id="AM942759">
    <property type="protein sequence ID" value="CAR46770.1"/>
    <property type="molecule type" value="Genomic_DNA"/>
</dbReference>
<dbReference type="RefSeq" id="WP_004246197.1">
    <property type="nucleotide sequence ID" value="NC_010554.1"/>
</dbReference>
<dbReference type="SMR" id="B4F2M2"/>
<dbReference type="EnsemblBacteria" id="CAR46770">
    <property type="protein sequence ID" value="CAR46770"/>
    <property type="gene ID" value="PMI3455"/>
</dbReference>
<dbReference type="GeneID" id="6801663"/>
<dbReference type="KEGG" id="pmr:PMI3455"/>
<dbReference type="eggNOG" id="COG0540">
    <property type="taxonomic scope" value="Bacteria"/>
</dbReference>
<dbReference type="HOGENOM" id="CLU_043846_1_2_6"/>
<dbReference type="UniPathway" id="UPA00070">
    <property type="reaction ID" value="UER00116"/>
</dbReference>
<dbReference type="Proteomes" id="UP000008319">
    <property type="component" value="Chromosome"/>
</dbReference>
<dbReference type="GO" id="GO:0005829">
    <property type="term" value="C:cytosol"/>
    <property type="evidence" value="ECO:0007669"/>
    <property type="project" value="TreeGrafter"/>
</dbReference>
<dbReference type="GO" id="GO:0016597">
    <property type="term" value="F:amino acid binding"/>
    <property type="evidence" value="ECO:0007669"/>
    <property type="project" value="InterPro"/>
</dbReference>
<dbReference type="GO" id="GO:0004070">
    <property type="term" value="F:aspartate carbamoyltransferase activity"/>
    <property type="evidence" value="ECO:0007669"/>
    <property type="project" value="UniProtKB-UniRule"/>
</dbReference>
<dbReference type="GO" id="GO:0006207">
    <property type="term" value="P:'de novo' pyrimidine nucleobase biosynthetic process"/>
    <property type="evidence" value="ECO:0007669"/>
    <property type="project" value="InterPro"/>
</dbReference>
<dbReference type="GO" id="GO:0044205">
    <property type="term" value="P:'de novo' UMP biosynthetic process"/>
    <property type="evidence" value="ECO:0007669"/>
    <property type="project" value="UniProtKB-UniRule"/>
</dbReference>
<dbReference type="GO" id="GO:0006520">
    <property type="term" value="P:amino acid metabolic process"/>
    <property type="evidence" value="ECO:0007669"/>
    <property type="project" value="InterPro"/>
</dbReference>
<dbReference type="FunFam" id="3.40.50.1370:FF:000001">
    <property type="entry name" value="Aspartate carbamoyltransferase"/>
    <property type="match status" value="1"/>
</dbReference>
<dbReference type="FunFam" id="3.40.50.1370:FF:000002">
    <property type="entry name" value="Aspartate carbamoyltransferase 2"/>
    <property type="match status" value="1"/>
</dbReference>
<dbReference type="Gene3D" id="3.40.50.1370">
    <property type="entry name" value="Aspartate/ornithine carbamoyltransferase"/>
    <property type="match status" value="2"/>
</dbReference>
<dbReference type="HAMAP" id="MF_00001">
    <property type="entry name" value="Asp_carb_tr"/>
    <property type="match status" value="1"/>
</dbReference>
<dbReference type="InterPro" id="IPR006132">
    <property type="entry name" value="Asp/Orn_carbamoyltranf_P-bd"/>
</dbReference>
<dbReference type="InterPro" id="IPR006130">
    <property type="entry name" value="Asp/Orn_carbamoylTrfase"/>
</dbReference>
<dbReference type="InterPro" id="IPR036901">
    <property type="entry name" value="Asp/Orn_carbamoylTrfase_sf"/>
</dbReference>
<dbReference type="InterPro" id="IPR002082">
    <property type="entry name" value="Asp_carbamoyltransf"/>
</dbReference>
<dbReference type="InterPro" id="IPR006131">
    <property type="entry name" value="Asp_carbamoyltransf_Asp/Orn-bd"/>
</dbReference>
<dbReference type="NCBIfam" id="TIGR00670">
    <property type="entry name" value="asp_carb_tr"/>
    <property type="match status" value="1"/>
</dbReference>
<dbReference type="NCBIfam" id="NF002032">
    <property type="entry name" value="PRK00856.1"/>
    <property type="match status" value="1"/>
</dbReference>
<dbReference type="PANTHER" id="PTHR45753:SF6">
    <property type="entry name" value="ASPARTATE CARBAMOYLTRANSFERASE"/>
    <property type="match status" value="1"/>
</dbReference>
<dbReference type="PANTHER" id="PTHR45753">
    <property type="entry name" value="ORNITHINE CARBAMOYLTRANSFERASE, MITOCHONDRIAL"/>
    <property type="match status" value="1"/>
</dbReference>
<dbReference type="Pfam" id="PF00185">
    <property type="entry name" value="OTCace"/>
    <property type="match status" value="1"/>
</dbReference>
<dbReference type="Pfam" id="PF02729">
    <property type="entry name" value="OTCace_N"/>
    <property type="match status" value="1"/>
</dbReference>
<dbReference type="PRINTS" id="PR00100">
    <property type="entry name" value="AOTCASE"/>
</dbReference>
<dbReference type="PRINTS" id="PR00101">
    <property type="entry name" value="ATCASE"/>
</dbReference>
<dbReference type="SUPFAM" id="SSF53671">
    <property type="entry name" value="Aspartate/ornithine carbamoyltransferase"/>
    <property type="match status" value="1"/>
</dbReference>
<dbReference type="PROSITE" id="PS00097">
    <property type="entry name" value="CARBAMOYLTRANSFERASE"/>
    <property type="match status" value="1"/>
</dbReference>
<feature type="chain" id="PRO_1000088787" description="Aspartate carbamoyltransferase catalytic subunit">
    <location>
        <begin position="1"/>
        <end position="311"/>
    </location>
</feature>
<feature type="binding site" evidence="1">
    <location>
        <position position="55"/>
    </location>
    <ligand>
        <name>carbamoyl phosphate</name>
        <dbReference type="ChEBI" id="CHEBI:58228"/>
    </ligand>
</feature>
<feature type="binding site" evidence="1">
    <location>
        <position position="56"/>
    </location>
    <ligand>
        <name>carbamoyl phosphate</name>
        <dbReference type="ChEBI" id="CHEBI:58228"/>
    </ligand>
</feature>
<feature type="binding site" evidence="1">
    <location>
        <position position="85"/>
    </location>
    <ligand>
        <name>L-aspartate</name>
        <dbReference type="ChEBI" id="CHEBI:29991"/>
    </ligand>
</feature>
<feature type="binding site" evidence="1">
    <location>
        <position position="106"/>
    </location>
    <ligand>
        <name>carbamoyl phosphate</name>
        <dbReference type="ChEBI" id="CHEBI:58228"/>
    </ligand>
</feature>
<feature type="binding site" evidence="1">
    <location>
        <position position="135"/>
    </location>
    <ligand>
        <name>carbamoyl phosphate</name>
        <dbReference type="ChEBI" id="CHEBI:58228"/>
    </ligand>
</feature>
<feature type="binding site" evidence="1">
    <location>
        <position position="138"/>
    </location>
    <ligand>
        <name>carbamoyl phosphate</name>
        <dbReference type="ChEBI" id="CHEBI:58228"/>
    </ligand>
</feature>
<feature type="binding site" evidence="1">
    <location>
        <position position="168"/>
    </location>
    <ligand>
        <name>L-aspartate</name>
        <dbReference type="ChEBI" id="CHEBI:29991"/>
    </ligand>
</feature>
<feature type="binding site" evidence="1">
    <location>
        <position position="230"/>
    </location>
    <ligand>
        <name>L-aspartate</name>
        <dbReference type="ChEBI" id="CHEBI:29991"/>
    </ligand>
</feature>
<feature type="binding site" evidence="1">
    <location>
        <position position="268"/>
    </location>
    <ligand>
        <name>carbamoyl phosphate</name>
        <dbReference type="ChEBI" id="CHEBI:58228"/>
    </ligand>
</feature>
<feature type="binding site" evidence="1">
    <location>
        <position position="269"/>
    </location>
    <ligand>
        <name>carbamoyl phosphate</name>
        <dbReference type="ChEBI" id="CHEBI:58228"/>
    </ligand>
</feature>